<protein>
    <recommendedName>
        <fullName evidence="1">Esterase FrsA</fullName>
        <ecNumber evidence="1">3.1.1.1</ecNumber>
    </recommendedName>
</protein>
<accession>A7ZHZ8</accession>
<feature type="chain" id="PRO_1000064477" description="Esterase FrsA">
    <location>
        <begin position="1"/>
        <end position="414"/>
    </location>
</feature>
<keyword id="KW-0378">Hydrolase</keyword>
<keyword id="KW-1185">Reference proteome</keyword>
<keyword id="KW-0719">Serine esterase</keyword>
<proteinExistence type="inferred from homology"/>
<dbReference type="EC" id="3.1.1.1" evidence="1"/>
<dbReference type="EMBL" id="CP000800">
    <property type="protein sequence ID" value="ABV20914.1"/>
    <property type="molecule type" value="Genomic_DNA"/>
</dbReference>
<dbReference type="RefSeq" id="WP_000189539.1">
    <property type="nucleotide sequence ID" value="NC_009801.1"/>
</dbReference>
<dbReference type="SMR" id="A7ZHZ8"/>
<dbReference type="ESTHER" id="ecoli-yafa">
    <property type="family name" value="Duf_1100-R"/>
</dbReference>
<dbReference type="GeneID" id="75205728"/>
<dbReference type="KEGG" id="ecw:EcE24377A_0271"/>
<dbReference type="HOGENOM" id="CLU_036819_0_0_6"/>
<dbReference type="Proteomes" id="UP000001122">
    <property type="component" value="Chromosome"/>
</dbReference>
<dbReference type="GO" id="GO:0106435">
    <property type="term" value="F:carboxylesterase activity"/>
    <property type="evidence" value="ECO:0007669"/>
    <property type="project" value="UniProtKB-EC"/>
</dbReference>
<dbReference type="FunFam" id="3.40.50.1820:FF:000022">
    <property type="entry name" value="Esterase FrsA"/>
    <property type="match status" value="1"/>
</dbReference>
<dbReference type="Gene3D" id="3.40.50.1820">
    <property type="entry name" value="alpha/beta hydrolase"/>
    <property type="match status" value="1"/>
</dbReference>
<dbReference type="HAMAP" id="MF_01063">
    <property type="entry name" value="FrsA"/>
    <property type="match status" value="1"/>
</dbReference>
<dbReference type="InterPro" id="IPR029058">
    <property type="entry name" value="AB_hydrolase_fold"/>
</dbReference>
<dbReference type="InterPro" id="IPR043423">
    <property type="entry name" value="FrsA"/>
</dbReference>
<dbReference type="InterPro" id="IPR010520">
    <property type="entry name" value="FrsA-like"/>
</dbReference>
<dbReference type="InterPro" id="IPR050261">
    <property type="entry name" value="FrsA_esterase"/>
</dbReference>
<dbReference type="NCBIfam" id="NF003460">
    <property type="entry name" value="PRK05077.1"/>
    <property type="match status" value="1"/>
</dbReference>
<dbReference type="PANTHER" id="PTHR22946">
    <property type="entry name" value="DIENELACTONE HYDROLASE DOMAIN-CONTAINING PROTEIN-RELATED"/>
    <property type="match status" value="1"/>
</dbReference>
<dbReference type="PANTHER" id="PTHR22946:SF4">
    <property type="entry name" value="ESTERASE FRSA"/>
    <property type="match status" value="1"/>
</dbReference>
<dbReference type="Pfam" id="PF06500">
    <property type="entry name" value="FrsA-like"/>
    <property type="match status" value="1"/>
</dbReference>
<dbReference type="SUPFAM" id="SSF53474">
    <property type="entry name" value="alpha/beta-Hydrolases"/>
    <property type="match status" value="1"/>
</dbReference>
<name>FRSA_ECO24</name>
<evidence type="ECO:0000255" key="1">
    <source>
        <dbReference type="HAMAP-Rule" id="MF_01063"/>
    </source>
</evidence>
<sequence>MTQANLSETLFKPRFKHPETSTLVRRFNHGAQPPVQSALDGKTIPHWYRMINRLMWIWRGIDPREILDVQARIVMSDAERTDDDLYDTVIGYRGGNWIYEWATQAMVWQQKACAEEDPQLSGRHWLHAATLYNIAAYPHLKGDDLAEQAQALSNRAYEEAAQRLPGTMRQMEFTVPGGAPITGFLHMPKGDGPFPTVLMCGGLDAMQTDYYSLYERYFAPRGIAMLTIDMPSVGFSSKWKLTQDSSLLHQHVLKALPNVPWVDHTRVAAFGFRFGANVAVRLAYLESPRLKAVACLGPVVHTLLSDFKCQQQVPEMYLDVLASRLGMHDASDDALRVELNRYSLKVQGLLGRRCPTPMLSGYWKNDPFSPEEDSRLITSSSADGKLLEIPFNPVYRNFDKGLQEITGWIEKRLC</sequence>
<comment type="function">
    <text evidence="1">Catalyzes the hydrolysis of esters.</text>
</comment>
<comment type="catalytic activity">
    <reaction evidence="1">
        <text>a carboxylic ester + H2O = an alcohol + a carboxylate + H(+)</text>
        <dbReference type="Rhea" id="RHEA:21164"/>
        <dbReference type="ChEBI" id="CHEBI:15377"/>
        <dbReference type="ChEBI" id="CHEBI:15378"/>
        <dbReference type="ChEBI" id="CHEBI:29067"/>
        <dbReference type="ChEBI" id="CHEBI:30879"/>
        <dbReference type="ChEBI" id="CHEBI:33308"/>
        <dbReference type="EC" id="3.1.1.1"/>
    </reaction>
</comment>
<comment type="similarity">
    <text evidence="1">Belongs to the FrsA family.</text>
</comment>
<gene>
    <name evidence="1" type="primary">frsA</name>
    <name type="ordered locus">EcE24377A_0271</name>
</gene>
<reference key="1">
    <citation type="journal article" date="2008" name="J. Bacteriol.">
        <title>The pangenome structure of Escherichia coli: comparative genomic analysis of E. coli commensal and pathogenic isolates.</title>
        <authorList>
            <person name="Rasko D.A."/>
            <person name="Rosovitz M.J."/>
            <person name="Myers G.S.A."/>
            <person name="Mongodin E.F."/>
            <person name="Fricke W.F."/>
            <person name="Gajer P."/>
            <person name="Crabtree J."/>
            <person name="Sebaihia M."/>
            <person name="Thomson N.R."/>
            <person name="Chaudhuri R."/>
            <person name="Henderson I.R."/>
            <person name="Sperandio V."/>
            <person name="Ravel J."/>
        </authorList>
    </citation>
    <scope>NUCLEOTIDE SEQUENCE [LARGE SCALE GENOMIC DNA]</scope>
    <source>
        <strain>E24377A / ETEC</strain>
    </source>
</reference>
<organism>
    <name type="scientific">Escherichia coli O139:H28 (strain E24377A / ETEC)</name>
    <dbReference type="NCBI Taxonomy" id="331111"/>
    <lineage>
        <taxon>Bacteria</taxon>
        <taxon>Pseudomonadati</taxon>
        <taxon>Pseudomonadota</taxon>
        <taxon>Gammaproteobacteria</taxon>
        <taxon>Enterobacterales</taxon>
        <taxon>Enterobacteriaceae</taxon>
        <taxon>Escherichia</taxon>
    </lineage>
</organism>